<keyword id="KW-0007">Acetylation</keyword>
<keyword id="KW-0556">Organic radical</keyword>
<keyword id="KW-1185">Reference proteome</keyword>
<gene>
    <name evidence="1" type="primary">grcA</name>
    <name type="ordered locus">EC55989_2868</name>
</gene>
<name>GRCA_ECO55</name>
<accession>B7LDH2</accession>
<sequence>MITGIQITKAANDDLLNSFWLLDSEKGEARCIVAKAGYAEDEVVAVSKLGDIEYREVPVEVKPEVRVEGGQHLNVNVLRRETLEDAVKHPEKYPQLTIRVSGYAVRFNSLTPEQQRDVIARTFTESL</sequence>
<dbReference type="EMBL" id="CU928145">
    <property type="protein sequence ID" value="CAU98738.1"/>
    <property type="molecule type" value="Genomic_DNA"/>
</dbReference>
<dbReference type="RefSeq" id="WP_000627807.1">
    <property type="nucleotide sequence ID" value="NC_011748.1"/>
</dbReference>
<dbReference type="SMR" id="B7LDH2"/>
<dbReference type="GeneID" id="93774507"/>
<dbReference type="KEGG" id="eck:EC55989_2868"/>
<dbReference type="HOGENOM" id="CLU_133780_0_0_6"/>
<dbReference type="Proteomes" id="UP000000746">
    <property type="component" value="Chromosome"/>
</dbReference>
<dbReference type="GO" id="GO:0005829">
    <property type="term" value="C:cytosol"/>
    <property type="evidence" value="ECO:0007669"/>
    <property type="project" value="TreeGrafter"/>
</dbReference>
<dbReference type="GO" id="GO:0008861">
    <property type="term" value="F:formate C-acetyltransferase activity"/>
    <property type="evidence" value="ECO:0007669"/>
    <property type="project" value="TreeGrafter"/>
</dbReference>
<dbReference type="FunFam" id="3.20.70.20:FF:000002">
    <property type="entry name" value="Autonomous glycyl radical cofactor"/>
    <property type="match status" value="1"/>
</dbReference>
<dbReference type="Gene3D" id="3.20.70.20">
    <property type="match status" value="1"/>
</dbReference>
<dbReference type="HAMAP" id="MF_00806">
    <property type="entry name" value="GrcA"/>
    <property type="match status" value="1"/>
</dbReference>
<dbReference type="InterPro" id="IPR050244">
    <property type="entry name" value="Auton_GlycylRad_Cofactor"/>
</dbReference>
<dbReference type="InterPro" id="IPR019777">
    <property type="entry name" value="Form_AcTrfase_GR_CS"/>
</dbReference>
<dbReference type="InterPro" id="IPR001150">
    <property type="entry name" value="Gly_radical"/>
</dbReference>
<dbReference type="InterPro" id="IPR011140">
    <property type="entry name" value="Glycyl_radical_cofactor_GrcA"/>
</dbReference>
<dbReference type="NCBIfam" id="TIGR04365">
    <property type="entry name" value="spare_glycyl"/>
    <property type="match status" value="1"/>
</dbReference>
<dbReference type="PANTHER" id="PTHR30191">
    <property type="entry name" value="FORMATE ACETYLTRANSFERASE"/>
    <property type="match status" value="1"/>
</dbReference>
<dbReference type="PANTHER" id="PTHR30191:SF0">
    <property type="entry name" value="FORMATE ACETYLTRANSFERASE 1"/>
    <property type="match status" value="1"/>
</dbReference>
<dbReference type="Pfam" id="PF01228">
    <property type="entry name" value="Gly_radical"/>
    <property type="match status" value="1"/>
</dbReference>
<dbReference type="PIRSF" id="PIRSF000378">
    <property type="entry name" value="Gly_radicl_yfiD"/>
    <property type="match status" value="1"/>
</dbReference>
<dbReference type="SUPFAM" id="SSF51998">
    <property type="entry name" value="PFL-like glycyl radical enzymes"/>
    <property type="match status" value="1"/>
</dbReference>
<dbReference type="PROSITE" id="PS00850">
    <property type="entry name" value="GLY_RADICAL_1"/>
    <property type="match status" value="1"/>
</dbReference>
<dbReference type="PROSITE" id="PS51149">
    <property type="entry name" value="GLY_RADICAL_2"/>
    <property type="match status" value="1"/>
</dbReference>
<reference key="1">
    <citation type="journal article" date="2009" name="PLoS Genet.">
        <title>Organised genome dynamics in the Escherichia coli species results in highly diverse adaptive paths.</title>
        <authorList>
            <person name="Touchon M."/>
            <person name="Hoede C."/>
            <person name="Tenaillon O."/>
            <person name="Barbe V."/>
            <person name="Baeriswyl S."/>
            <person name="Bidet P."/>
            <person name="Bingen E."/>
            <person name="Bonacorsi S."/>
            <person name="Bouchier C."/>
            <person name="Bouvet O."/>
            <person name="Calteau A."/>
            <person name="Chiapello H."/>
            <person name="Clermont O."/>
            <person name="Cruveiller S."/>
            <person name="Danchin A."/>
            <person name="Diard M."/>
            <person name="Dossat C."/>
            <person name="Karoui M.E."/>
            <person name="Frapy E."/>
            <person name="Garry L."/>
            <person name="Ghigo J.M."/>
            <person name="Gilles A.M."/>
            <person name="Johnson J."/>
            <person name="Le Bouguenec C."/>
            <person name="Lescat M."/>
            <person name="Mangenot S."/>
            <person name="Martinez-Jehanne V."/>
            <person name="Matic I."/>
            <person name="Nassif X."/>
            <person name="Oztas S."/>
            <person name="Petit M.A."/>
            <person name="Pichon C."/>
            <person name="Rouy Z."/>
            <person name="Ruf C.S."/>
            <person name="Schneider D."/>
            <person name="Tourret J."/>
            <person name="Vacherie B."/>
            <person name="Vallenet D."/>
            <person name="Medigue C."/>
            <person name="Rocha E.P.C."/>
            <person name="Denamur E."/>
        </authorList>
    </citation>
    <scope>NUCLEOTIDE SEQUENCE [LARGE SCALE GENOMIC DNA]</scope>
    <source>
        <strain>55989 / EAEC</strain>
    </source>
</reference>
<proteinExistence type="inferred from homology"/>
<comment type="function">
    <text evidence="1">Acts as a radical domain for damaged PFL and possibly other radical proteins.</text>
</comment>
<feature type="chain" id="PRO_1000148568" description="Autonomous glycyl radical cofactor">
    <location>
        <begin position="1"/>
        <end position="127"/>
    </location>
</feature>
<feature type="domain" description="Glycine radical" evidence="1">
    <location>
        <begin position="5"/>
        <end position="127"/>
    </location>
</feature>
<feature type="modified residue" description="N6-acetyllysine" evidence="1">
    <location>
        <position position="48"/>
    </location>
</feature>
<feature type="modified residue" description="N6-acetyllysine" evidence="1">
    <location>
        <position position="88"/>
    </location>
</feature>
<feature type="modified residue" description="N6-acetyllysine" evidence="1">
    <location>
        <position position="92"/>
    </location>
</feature>
<feature type="modified residue" description="Glycine radical" evidence="1">
    <location>
        <position position="102"/>
    </location>
</feature>
<evidence type="ECO:0000255" key="1">
    <source>
        <dbReference type="HAMAP-Rule" id="MF_00806"/>
    </source>
</evidence>
<organism>
    <name type="scientific">Escherichia coli (strain 55989 / EAEC)</name>
    <dbReference type="NCBI Taxonomy" id="585055"/>
    <lineage>
        <taxon>Bacteria</taxon>
        <taxon>Pseudomonadati</taxon>
        <taxon>Pseudomonadota</taxon>
        <taxon>Gammaproteobacteria</taxon>
        <taxon>Enterobacterales</taxon>
        <taxon>Enterobacteriaceae</taxon>
        <taxon>Escherichia</taxon>
    </lineage>
</organism>
<protein>
    <recommendedName>
        <fullName evidence="1">Autonomous glycyl radical cofactor</fullName>
    </recommendedName>
</protein>